<keyword id="KW-0678">Repressor</keyword>
<keyword id="KW-0687">Ribonucleoprotein</keyword>
<keyword id="KW-0689">Ribosomal protein</keyword>
<keyword id="KW-0694">RNA-binding</keyword>
<keyword id="KW-0699">rRNA-binding</keyword>
<keyword id="KW-0810">Translation regulation</keyword>
<keyword id="KW-0820">tRNA-binding</keyword>
<name>RL1_THEM4</name>
<organism>
    <name type="scientific">Thermosipho melanesiensis (strain DSM 12029 / CIP 104789 / BI429)</name>
    <dbReference type="NCBI Taxonomy" id="391009"/>
    <lineage>
        <taxon>Bacteria</taxon>
        <taxon>Thermotogati</taxon>
        <taxon>Thermotogota</taxon>
        <taxon>Thermotogae</taxon>
        <taxon>Thermotogales</taxon>
        <taxon>Fervidobacteriaceae</taxon>
        <taxon>Thermosipho</taxon>
    </lineage>
</organism>
<accession>A6LKQ6</accession>
<reference key="1">
    <citation type="submission" date="2007-05" db="EMBL/GenBank/DDBJ databases">
        <title>Complete sequence of Thermosipho melanesiensis BI429.</title>
        <authorList>
            <consortium name="US DOE Joint Genome Institute"/>
            <person name="Copeland A."/>
            <person name="Lucas S."/>
            <person name="Lapidus A."/>
            <person name="Barry K."/>
            <person name="Glavina del Rio T."/>
            <person name="Dalin E."/>
            <person name="Tice H."/>
            <person name="Pitluck S."/>
            <person name="Chertkov O."/>
            <person name="Brettin T."/>
            <person name="Bruce D."/>
            <person name="Detter J.C."/>
            <person name="Han C."/>
            <person name="Schmutz J."/>
            <person name="Larimer F."/>
            <person name="Land M."/>
            <person name="Hauser L."/>
            <person name="Kyrpides N."/>
            <person name="Mikhailova N."/>
            <person name="Nelson K."/>
            <person name="Gogarten J.P."/>
            <person name="Noll K."/>
            <person name="Richardson P."/>
        </authorList>
    </citation>
    <scope>NUCLEOTIDE SEQUENCE [LARGE SCALE GENOMIC DNA]</scope>
    <source>
        <strain>DSM 12029 / CIP 104789 / BI429</strain>
    </source>
</reference>
<sequence>MPKHSKRYNEVRKLVDRTKEYDLNEAVDLAKKVATAKFDETVELHIKTNIDYRKSDQQIRSTISLPHGTGKEVRVLVFAKGEKAEEAKKAGADYVGAEDLAEKIQKEGFLDFDVAIATPDMMKIIGRLGKILGPRGLMPNPKAGTVTNDVAAAVKDFKKGRMEIRTDKTGNLHIPVGKASFEKEKLTENIKSAYEQVLNLKPTGVKGTFIKKVVLSTTMGPGIKVNPATLTQ</sequence>
<dbReference type="EMBL" id="CP000716">
    <property type="protein sequence ID" value="ABR30507.1"/>
    <property type="molecule type" value="Genomic_DNA"/>
</dbReference>
<dbReference type="RefSeq" id="WP_012056868.1">
    <property type="nucleotide sequence ID" value="NC_009616.1"/>
</dbReference>
<dbReference type="SMR" id="A6LKQ6"/>
<dbReference type="STRING" id="391009.Tmel_0643"/>
<dbReference type="KEGG" id="tme:Tmel_0643"/>
<dbReference type="eggNOG" id="COG0081">
    <property type="taxonomic scope" value="Bacteria"/>
</dbReference>
<dbReference type="HOGENOM" id="CLU_062853_0_0_0"/>
<dbReference type="OrthoDB" id="9803740at2"/>
<dbReference type="Proteomes" id="UP000001110">
    <property type="component" value="Chromosome"/>
</dbReference>
<dbReference type="GO" id="GO:0015934">
    <property type="term" value="C:large ribosomal subunit"/>
    <property type="evidence" value="ECO:0007669"/>
    <property type="project" value="InterPro"/>
</dbReference>
<dbReference type="GO" id="GO:0019843">
    <property type="term" value="F:rRNA binding"/>
    <property type="evidence" value="ECO:0007669"/>
    <property type="project" value="UniProtKB-UniRule"/>
</dbReference>
<dbReference type="GO" id="GO:0003735">
    <property type="term" value="F:structural constituent of ribosome"/>
    <property type="evidence" value="ECO:0007669"/>
    <property type="project" value="InterPro"/>
</dbReference>
<dbReference type="GO" id="GO:0000049">
    <property type="term" value="F:tRNA binding"/>
    <property type="evidence" value="ECO:0007669"/>
    <property type="project" value="UniProtKB-KW"/>
</dbReference>
<dbReference type="GO" id="GO:0006417">
    <property type="term" value="P:regulation of translation"/>
    <property type="evidence" value="ECO:0007669"/>
    <property type="project" value="UniProtKB-KW"/>
</dbReference>
<dbReference type="GO" id="GO:0006412">
    <property type="term" value="P:translation"/>
    <property type="evidence" value="ECO:0007669"/>
    <property type="project" value="UniProtKB-UniRule"/>
</dbReference>
<dbReference type="CDD" id="cd00403">
    <property type="entry name" value="Ribosomal_L1"/>
    <property type="match status" value="1"/>
</dbReference>
<dbReference type="FunFam" id="3.40.50.790:FF:000001">
    <property type="entry name" value="50S ribosomal protein L1"/>
    <property type="match status" value="1"/>
</dbReference>
<dbReference type="Gene3D" id="3.30.190.20">
    <property type="match status" value="1"/>
</dbReference>
<dbReference type="Gene3D" id="3.40.50.790">
    <property type="match status" value="1"/>
</dbReference>
<dbReference type="HAMAP" id="MF_01318_B">
    <property type="entry name" value="Ribosomal_uL1_B"/>
    <property type="match status" value="1"/>
</dbReference>
<dbReference type="InterPro" id="IPR005878">
    <property type="entry name" value="Ribosom_uL1_bac-type"/>
</dbReference>
<dbReference type="InterPro" id="IPR002143">
    <property type="entry name" value="Ribosomal_uL1"/>
</dbReference>
<dbReference type="InterPro" id="IPR023674">
    <property type="entry name" value="Ribosomal_uL1-like"/>
</dbReference>
<dbReference type="InterPro" id="IPR028364">
    <property type="entry name" value="Ribosomal_uL1/biogenesis"/>
</dbReference>
<dbReference type="InterPro" id="IPR016095">
    <property type="entry name" value="Ribosomal_uL1_3-a/b-sand"/>
</dbReference>
<dbReference type="InterPro" id="IPR023673">
    <property type="entry name" value="Ribosomal_uL1_CS"/>
</dbReference>
<dbReference type="NCBIfam" id="TIGR01169">
    <property type="entry name" value="rplA_bact"/>
    <property type="match status" value="1"/>
</dbReference>
<dbReference type="PANTHER" id="PTHR36427">
    <property type="entry name" value="54S RIBOSOMAL PROTEIN L1, MITOCHONDRIAL"/>
    <property type="match status" value="1"/>
</dbReference>
<dbReference type="PANTHER" id="PTHR36427:SF3">
    <property type="entry name" value="LARGE RIBOSOMAL SUBUNIT PROTEIN UL1M"/>
    <property type="match status" value="1"/>
</dbReference>
<dbReference type="Pfam" id="PF00687">
    <property type="entry name" value="Ribosomal_L1"/>
    <property type="match status" value="1"/>
</dbReference>
<dbReference type="PIRSF" id="PIRSF002155">
    <property type="entry name" value="Ribosomal_L1"/>
    <property type="match status" value="1"/>
</dbReference>
<dbReference type="SUPFAM" id="SSF56808">
    <property type="entry name" value="Ribosomal protein L1"/>
    <property type="match status" value="1"/>
</dbReference>
<dbReference type="PROSITE" id="PS01199">
    <property type="entry name" value="RIBOSOMAL_L1"/>
    <property type="match status" value="1"/>
</dbReference>
<gene>
    <name evidence="1" type="primary">rplA</name>
    <name type="ordered locus">Tmel_0643</name>
</gene>
<protein>
    <recommendedName>
        <fullName evidence="1">Large ribosomal subunit protein uL1</fullName>
    </recommendedName>
    <alternativeName>
        <fullName evidence="2">50S ribosomal protein L1</fullName>
    </alternativeName>
</protein>
<evidence type="ECO:0000255" key="1">
    <source>
        <dbReference type="HAMAP-Rule" id="MF_01318"/>
    </source>
</evidence>
<evidence type="ECO:0000305" key="2"/>
<proteinExistence type="inferred from homology"/>
<feature type="chain" id="PRO_1000051926" description="Large ribosomal subunit protein uL1">
    <location>
        <begin position="1"/>
        <end position="232"/>
    </location>
</feature>
<comment type="function">
    <text evidence="1">Binds directly to 23S rRNA. The L1 stalk is quite mobile in the ribosome, and is involved in E site tRNA release.</text>
</comment>
<comment type="function">
    <text evidence="1">Protein L1 is also a translational repressor protein, it controls the translation of the L11 operon by binding to its mRNA.</text>
</comment>
<comment type="subunit">
    <text evidence="1">Part of the 50S ribosomal subunit.</text>
</comment>
<comment type="similarity">
    <text evidence="1">Belongs to the universal ribosomal protein uL1 family.</text>
</comment>